<protein>
    <recommendedName>
        <fullName evidence="1">Large ribosomal subunit protein uL24</fullName>
    </recommendedName>
    <alternativeName>
        <fullName evidence="2">50S ribosomal protein L24</fullName>
    </alternativeName>
</protein>
<dbReference type="EMBL" id="CP000614">
    <property type="protein sequence ID" value="ABO53354.1"/>
    <property type="molecule type" value="Genomic_DNA"/>
</dbReference>
<dbReference type="SMR" id="A4JAQ1"/>
<dbReference type="KEGG" id="bvi:Bcep1808_0341"/>
<dbReference type="eggNOG" id="COG0198">
    <property type="taxonomic scope" value="Bacteria"/>
</dbReference>
<dbReference type="HOGENOM" id="CLU_093315_2_2_4"/>
<dbReference type="Proteomes" id="UP000002287">
    <property type="component" value="Chromosome 1"/>
</dbReference>
<dbReference type="GO" id="GO:1990904">
    <property type="term" value="C:ribonucleoprotein complex"/>
    <property type="evidence" value="ECO:0007669"/>
    <property type="project" value="UniProtKB-KW"/>
</dbReference>
<dbReference type="GO" id="GO:0005840">
    <property type="term" value="C:ribosome"/>
    <property type="evidence" value="ECO:0007669"/>
    <property type="project" value="UniProtKB-KW"/>
</dbReference>
<dbReference type="GO" id="GO:0019843">
    <property type="term" value="F:rRNA binding"/>
    <property type="evidence" value="ECO:0007669"/>
    <property type="project" value="UniProtKB-UniRule"/>
</dbReference>
<dbReference type="GO" id="GO:0003735">
    <property type="term" value="F:structural constituent of ribosome"/>
    <property type="evidence" value="ECO:0007669"/>
    <property type="project" value="InterPro"/>
</dbReference>
<dbReference type="GO" id="GO:0006412">
    <property type="term" value="P:translation"/>
    <property type="evidence" value="ECO:0007669"/>
    <property type="project" value="UniProtKB-UniRule"/>
</dbReference>
<dbReference type="CDD" id="cd06089">
    <property type="entry name" value="KOW_RPL26"/>
    <property type="match status" value="1"/>
</dbReference>
<dbReference type="Gene3D" id="2.30.30.30">
    <property type="match status" value="1"/>
</dbReference>
<dbReference type="HAMAP" id="MF_01326_B">
    <property type="entry name" value="Ribosomal_uL24_B"/>
    <property type="match status" value="1"/>
</dbReference>
<dbReference type="InterPro" id="IPR014722">
    <property type="entry name" value="Rib_uL2_dom2"/>
</dbReference>
<dbReference type="InterPro" id="IPR003256">
    <property type="entry name" value="Ribosomal_uL24"/>
</dbReference>
<dbReference type="InterPro" id="IPR005825">
    <property type="entry name" value="Ribosomal_uL24_CS"/>
</dbReference>
<dbReference type="InterPro" id="IPR041988">
    <property type="entry name" value="Ribosomal_uL24_KOW"/>
</dbReference>
<dbReference type="InterPro" id="IPR008991">
    <property type="entry name" value="Translation_prot_SH3-like_sf"/>
</dbReference>
<dbReference type="NCBIfam" id="TIGR01079">
    <property type="entry name" value="rplX_bact"/>
    <property type="match status" value="1"/>
</dbReference>
<dbReference type="PANTHER" id="PTHR12903">
    <property type="entry name" value="MITOCHONDRIAL RIBOSOMAL PROTEIN L24"/>
    <property type="match status" value="1"/>
</dbReference>
<dbReference type="Pfam" id="PF17136">
    <property type="entry name" value="ribosomal_L24"/>
    <property type="match status" value="1"/>
</dbReference>
<dbReference type="SUPFAM" id="SSF50104">
    <property type="entry name" value="Translation proteins SH3-like domain"/>
    <property type="match status" value="1"/>
</dbReference>
<dbReference type="PROSITE" id="PS01108">
    <property type="entry name" value="RIBOSOMAL_L24"/>
    <property type="match status" value="1"/>
</dbReference>
<reference key="1">
    <citation type="submission" date="2007-03" db="EMBL/GenBank/DDBJ databases">
        <title>Complete sequence of chromosome 1 of Burkholderia vietnamiensis G4.</title>
        <authorList>
            <consortium name="US DOE Joint Genome Institute"/>
            <person name="Copeland A."/>
            <person name="Lucas S."/>
            <person name="Lapidus A."/>
            <person name="Barry K."/>
            <person name="Detter J.C."/>
            <person name="Glavina del Rio T."/>
            <person name="Hammon N."/>
            <person name="Israni S."/>
            <person name="Dalin E."/>
            <person name="Tice H."/>
            <person name="Pitluck S."/>
            <person name="Chain P."/>
            <person name="Malfatti S."/>
            <person name="Shin M."/>
            <person name="Vergez L."/>
            <person name="Schmutz J."/>
            <person name="Larimer F."/>
            <person name="Land M."/>
            <person name="Hauser L."/>
            <person name="Kyrpides N."/>
            <person name="Tiedje J."/>
            <person name="Richardson P."/>
        </authorList>
    </citation>
    <scope>NUCLEOTIDE SEQUENCE [LARGE SCALE GENOMIC DNA]</scope>
    <source>
        <strain>G4 / LMG 22486</strain>
    </source>
</reference>
<comment type="function">
    <text evidence="1">One of two assembly initiator proteins, it binds directly to the 5'-end of the 23S rRNA, where it nucleates assembly of the 50S subunit.</text>
</comment>
<comment type="function">
    <text evidence="1">One of the proteins that surrounds the polypeptide exit tunnel on the outside of the subunit.</text>
</comment>
<comment type="subunit">
    <text evidence="1">Part of the 50S ribosomal subunit.</text>
</comment>
<comment type="similarity">
    <text evidence="1">Belongs to the universal ribosomal protein uL24 family.</text>
</comment>
<name>RL24_BURVG</name>
<organism>
    <name type="scientific">Burkholderia vietnamiensis (strain G4 / LMG 22486)</name>
    <name type="common">Burkholderia cepacia (strain R1808)</name>
    <dbReference type="NCBI Taxonomy" id="269482"/>
    <lineage>
        <taxon>Bacteria</taxon>
        <taxon>Pseudomonadati</taxon>
        <taxon>Pseudomonadota</taxon>
        <taxon>Betaproteobacteria</taxon>
        <taxon>Burkholderiales</taxon>
        <taxon>Burkholderiaceae</taxon>
        <taxon>Burkholderia</taxon>
        <taxon>Burkholderia cepacia complex</taxon>
    </lineage>
</organism>
<sequence length="102" mass="10709">MNKIRKGDEVIVVTGKDKGKRGVVLAVGAEHVTVEGINLVKKHVKPNPMKGTTGGVEAKTMPLHISNVALVDANGKASRVGIKVEEGKKVRFLKTTGAVLSA</sequence>
<evidence type="ECO:0000255" key="1">
    <source>
        <dbReference type="HAMAP-Rule" id="MF_01326"/>
    </source>
</evidence>
<evidence type="ECO:0000305" key="2"/>
<keyword id="KW-0687">Ribonucleoprotein</keyword>
<keyword id="KW-0689">Ribosomal protein</keyword>
<keyword id="KW-0694">RNA-binding</keyword>
<keyword id="KW-0699">rRNA-binding</keyword>
<gene>
    <name evidence="1" type="primary">rplX</name>
    <name type="ordered locus">Bcep1808_0341</name>
</gene>
<accession>A4JAQ1</accession>
<proteinExistence type="inferred from homology"/>
<feature type="chain" id="PRO_1000052197" description="Large ribosomal subunit protein uL24">
    <location>
        <begin position="1"/>
        <end position="102"/>
    </location>
</feature>